<feature type="chain" id="PRO_0000262532" description="Palmdelphin">
    <location>
        <begin position="1"/>
        <end position="535"/>
    </location>
</feature>
<feature type="region of interest" description="Disordered" evidence="3">
    <location>
        <begin position="423"/>
        <end position="450"/>
    </location>
</feature>
<feature type="coiled-coil region" evidence="2">
    <location>
        <begin position="1"/>
        <end position="105"/>
    </location>
</feature>
<feature type="compositionally biased region" description="Acidic residues" evidence="3">
    <location>
        <begin position="424"/>
        <end position="436"/>
    </location>
</feature>
<feature type="compositionally biased region" description="Basic and acidic residues" evidence="3">
    <location>
        <begin position="437"/>
        <end position="446"/>
    </location>
</feature>
<accession>Q7ZX27</accession>
<proteinExistence type="evidence at transcript level"/>
<comment type="subcellular location">
    <subcellularLocation>
        <location evidence="1">Cytoplasm</location>
    </subcellularLocation>
    <subcellularLocation>
        <location>Cell projection</location>
        <location>Dendrite</location>
    </subcellularLocation>
    <subcellularLocation>
        <location evidence="1">Cell projection</location>
        <location evidence="1">Dendritic spine</location>
    </subcellularLocation>
</comment>
<comment type="similarity">
    <text evidence="4">Belongs to the paralemmin family.</text>
</comment>
<sequence length="535" mass="60506">MEEAELLKERLQAITNKRKIQEDIAQRRIQIEEEKLKLHHLKKKALREKWLLDGLSTLSSEEQEDMLRQTQADQQQIKHLESSTDRLEQEIDGLEKEELQVSTKEVCVLQRLKSVERTTEDIIKAVKAEVREEPVHDIYAGIPDLPASYKPFFVKRMESATQEDGEEPRKALFAMEIKVEKDIKSGKSTVLSTIPVPSSEFEDAGVKVYDDGRKSIYALKSEGRGTQNGVDTLAPVEVEDLLRKATEKRSESPTEYHEPVFSNAYGSTQKGYISPRMNGHNSPHSENGVTQNGIVNKEALPCPTVPREVSRIKGPFPEESNISHNQPSMETQAEEPMADHTEHQPTVQRNHYKEIPNNLGDYNPDFSSLNLEEDMHYNVVHATPCCTDDSEPVTMIFMGYKHADDGDVKPISDYEGIIRAELVVIDDDDDDDDDEEADKKGEENTKESVSVSPIIRNQVITSSKIQDSIKKPTNQNITLNNQLPYKNSMSLQEQEASLGYNSFPIPNKQIVEDGTEDPSLTALRIRMAKLGRKVI</sequence>
<organism>
    <name type="scientific">Xenopus laevis</name>
    <name type="common">African clawed frog</name>
    <dbReference type="NCBI Taxonomy" id="8355"/>
    <lineage>
        <taxon>Eukaryota</taxon>
        <taxon>Metazoa</taxon>
        <taxon>Chordata</taxon>
        <taxon>Craniata</taxon>
        <taxon>Vertebrata</taxon>
        <taxon>Euteleostomi</taxon>
        <taxon>Amphibia</taxon>
        <taxon>Batrachia</taxon>
        <taxon>Anura</taxon>
        <taxon>Pipoidea</taxon>
        <taxon>Pipidae</taxon>
        <taxon>Xenopodinae</taxon>
        <taxon>Xenopus</taxon>
        <taxon>Xenopus</taxon>
    </lineage>
</organism>
<dbReference type="EMBL" id="BC045267">
    <property type="protein sequence ID" value="AAH45267.1"/>
    <property type="molecule type" value="mRNA"/>
</dbReference>
<dbReference type="RefSeq" id="NP_001080658.1">
    <property type="nucleotide sequence ID" value="NM_001087189.1"/>
</dbReference>
<dbReference type="SMR" id="Q7ZX27"/>
<dbReference type="DNASU" id="380350"/>
<dbReference type="GeneID" id="380350"/>
<dbReference type="KEGG" id="xla:380350"/>
<dbReference type="AGR" id="Xenbase:XB-GENE-6078375"/>
<dbReference type="CTD" id="380350"/>
<dbReference type="Xenbase" id="XB-GENE-6078375">
    <property type="gene designation" value="palmd.L"/>
</dbReference>
<dbReference type="OrthoDB" id="9937247at2759"/>
<dbReference type="Proteomes" id="UP000186698">
    <property type="component" value="Chromosome 4L"/>
</dbReference>
<dbReference type="Bgee" id="380350">
    <property type="expression patterns" value="Expressed in zone of skin and 14 other cell types or tissues"/>
</dbReference>
<dbReference type="GO" id="GO:0005737">
    <property type="term" value="C:cytoplasm"/>
    <property type="evidence" value="ECO:0000318"/>
    <property type="project" value="GO_Central"/>
</dbReference>
<dbReference type="GO" id="GO:0043197">
    <property type="term" value="C:dendritic spine"/>
    <property type="evidence" value="ECO:0007669"/>
    <property type="project" value="UniProtKB-SubCell"/>
</dbReference>
<dbReference type="GO" id="GO:0016020">
    <property type="term" value="C:membrane"/>
    <property type="evidence" value="ECO:0007669"/>
    <property type="project" value="InterPro"/>
</dbReference>
<dbReference type="GO" id="GO:0008360">
    <property type="term" value="P:regulation of cell shape"/>
    <property type="evidence" value="ECO:0007669"/>
    <property type="project" value="InterPro"/>
</dbReference>
<dbReference type="InterPro" id="IPR004965">
    <property type="entry name" value="Paralemmin"/>
</dbReference>
<dbReference type="PANTHER" id="PTHR46881">
    <property type="entry name" value="PALMDELPHIN"/>
    <property type="match status" value="1"/>
</dbReference>
<dbReference type="PANTHER" id="PTHR46881:SF1">
    <property type="entry name" value="PALMDELPHIN"/>
    <property type="match status" value="1"/>
</dbReference>
<dbReference type="Pfam" id="PF03285">
    <property type="entry name" value="Paralemmin"/>
    <property type="match status" value="1"/>
</dbReference>
<name>PALMD_XENLA</name>
<reference key="1">
    <citation type="submission" date="2003-01" db="EMBL/GenBank/DDBJ databases">
        <authorList>
            <consortium name="NIH - Xenopus Gene Collection (XGC) project"/>
        </authorList>
    </citation>
    <scope>NUCLEOTIDE SEQUENCE [LARGE SCALE MRNA]</scope>
    <source>
        <tissue>Embryo</tissue>
    </source>
</reference>
<gene>
    <name type="primary">palmd</name>
</gene>
<protein>
    <recommendedName>
        <fullName>Palmdelphin</fullName>
    </recommendedName>
</protein>
<keyword id="KW-0966">Cell projection</keyword>
<keyword id="KW-0175">Coiled coil</keyword>
<keyword id="KW-0963">Cytoplasm</keyword>
<keyword id="KW-1185">Reference proteome</keyword>
<keyword id="KW-0770">Synapse</keyword>
<evidence type="ECO:0000250" key="1"/>
<evidence type="ECO:0000255" key="2"/>
<evidence type="ECO:0000256" key="3">
    <source>
        <dbReference type="SAM" id="MobiDB-lite"/>
    </source>
</evidence>
<evidence type="ECO:0000305" key="4"/>